<sequence>MRFAPQLEQGRLLIRYKRFLADIETDSGELLTIHCPNTGSMLNCMMPGGRVWFSRSSDPKRKLPGTWEISETPQGRLACINTGRANTLVEEALRAGVISELEGFTTLKREVAYGQEKSRVDFRLEYPDGYLYLEVKSVTLGFDDSSVAAFPDAVTQRGARHLRELATLAREGVRAVLLYCVNLTGIDAVRPAKEIDPVYAAALREAIDAGVQILAYGVHLTPDEIVIDRRLQVHWLD</sequence>
<organism>
    <name type="scientific">Pseudomonas savastanoi pv. phaseolicola (strain 1448A / Race 6)</name>
    <name type="common">Pseudomonas syringae pv. phaseolicola (strain 1448A / Race 6)</name>
    <dbReference type="NCBI Taxonomy" id="264730"/>
    <lineage>
        <taxon>Bacteria</taxon>
        <taxon>Pseudomonadati</taxon>
        <taxon>Pseudomonadota</taxon>
        <taxon>Gammaproteobacteria</taxon>
        <taxon>Pseudomonadales</taxon>
        <taxon>Pseudomonadaceae</taxon>
        <taxon>Pseudomonas</taxon>
    </lineage>
</organism>
<dbReference type="EMBL" id="CP000058">
    <property type="protein sequence ID" value="AAZ37319.1"/>
    <property type="molecule type" value="Genomic_DNA"/>
</dbReference>
<dbReference type="RefSeq" id="WP_004658618.1">
    <property type="nucleotide sequence ID" value="NC_005773.3"/>
</dbReference>
<dbReference type="SMR" id="Q48N77"/>
<dbReference type="KEGG" id="psp:PSPPH_0863"/>
<dbReference type="eggNOG" id="COG1489">
    <property type="taxonomic scope" value="Bacteria"/>
</dbReference>
<dbReference type="HOGENOM" id="CLU_052299_2_0_6"/>
<dbReference type="Proteomes" id="UP000000551">
    <property type="component" value="Chromosome"/>
</dbReference>
<dbReference type="GO" id="GO:0003677">
    <property type="term" value="F:DNA binding"/>
    <property type="evidence" value="ECO:0007669"/>
    <property type="project" value="InterPro"/>
</dbReference>
<dbReference type="CDD" id="cd22359">
    <property type="entry name" value="SfsA-like_bacterial"/>
    <property type="match status" value="1"/>
</dbReference>
<dbReference type="FunFam" id="2.40.50.580:FF:000001">
    <property type="entry name" value="Sugar fermentation stimulation protein A"/>
    <property type="match status" value="1"/>
</dbReference>
<dbReference type="Gene3D" id="2.40.50.580">
    <property type="match status" value="1"/>
</dbReference>
<dbReference type="Gene3D" id="3.40.1350.60">
    <property type="match status" value="1"/>
</dbReference>
<dbReference type="HAMAP" id="MF_00095">
    <property type="entry name" value="SfsA"/>
    <property type="match status" value="1"/>
</dbReference>
<dbReference type="InterPro" id="IPR005224">
    <property type="entry name" value="SfsA"/>
</dbReference>
<dbReference type="InterPro" id="IPR040452">
    <property type="entry name" value="SfsA_C"/>
</dbReference>
<dbReference type="InterPro" id="IPR041465">
    <property type="entry name" value="SfsA_N"/>
</dbReference>
<dbReference type="NCBIfam" id="TIGR00230">
    <property type="entry name" value="sfsA"/>
    <property type="match status" value="1"/>
</dbReference>
<dbReference type="PANTHER" id="PTHR30545">
    <property type="entry name" value="SUGAR FERMENTATION STIMULATION PROTEIN A"/>
    <property type="match status" value="1"/>
</dbReference>
<dbReference type="PANTHER" id="PTHR30545:SF2">
    <property type="entry name" value="SUGAR FERMENTATION STIMULATION PROTEIN A"/>
    <property type="match status" value="1"/>
</dbReference>
<dbReference type="Pfam" id="PF03749">
    <property type="entry name" value="SfsA"/>
    <property type="match status" value="1"/>
</dbReference>
<dbReference type="Pfam" id="PF17746">
    <property type="entry name" value="SfsA_N"/>
    <property type="match status" value="1"/>
</dbReference>
<name>SFSA_PSE14</name>
<reference key="1">
    <citation type="journal article" date="2005" name="J. Bacteriol.">
        <title>Whole-genome sequence analysis of Pseudomonas syringae pv. phaseolicola 1448A reveals divergence among pathovars in genes involved in virulence and transposition.</title>
        <authorList>
            <person name="Joardar V."/>
            <person name="Lindeberg M."/>
            <person name="Jackson R.W."/>
            <person name="Selengut J."/>
            <person name="Dodson R."/>
            <person name="Brinkac L.M."/>
            <person name="Daugherty S.C."/>
            <person name="DeBoy R.T."/>
            <person name="Durkin A.S."/>
            <person name="Gwinn Giglio M."/>
            <person name="Madupu R."/>
            <person name="Nelson W.C."/>
            <person name="Rosovitz M.J."/>
            <person name="Sullivan S.A."/>
            <person name="Crabtree J."/>
            <person name="Creasy T."/>
            <person name="Davidsen T.M."/>
            <person name="Haft D.H."/>
            <person name="Zafar N."/>
            <person name="Zhou L."/>
            <person name="Halpin R."/>
            <person name="Holley T."/>
            <person name="Khouri H.M."/>
            <person name="Feldblyum T.V."/>
            <person name="White O."/>
            <person name="Fraser C.M."/>
            <person name="Chatterjee A.K."/>
            <person name="Cartinhour S."/>
            <person name="Schneider D."/>
            <person name="Mansfield J.W."/>
            <person name="Collmer A."/>
            <person name="Buell R."/>
        </authorList>
    </citation>
    <scope>NUCLEOTIDE SEQUENCE [LARGE SCALE GENOMIC DNA]</scope>
    <source>
        <strain>1448A / Race 6</strain>
    </source>
</reference>
<comment type="similarity">
    <text evidence="1">Belongs to the SfsA family.</text>
</comment>
<feature type="chain" id="PRO_1000008006" description="Sugar fermentation stimulation protein homolog">
    <location>
        <begin position="1"/>
        <end position="237"/>
    </location>
</feature>
<proteinExistence type="inferred from homology"/>
<protein>
    <recommendedName>
        <fullName evidence="1">Sugar fermentation stimulation protein homolog</fullName>
    </recommendedName>
</protein>
<gene>
    <name evidence="1" type="primary">sfsA</name>
    <name type="ordered locus">PSPPH_0863</name>
</gene>
<accession>Q48N77</accession>
<evidence type="ECO:0000255" key="1">
    <source>
        <dbReference type="HAMAP-Rule" id="MF_00095"/>
    </source>
</evidence>